<protein>
    <recommendedName>
        <fullName evidence="7">Splicing factor U2af large subunit B</fullName>
    </recommendedName>
    <alternativeName>
        <fullName evidence="7">U2 auxiliary factor 65 kDa subunit B</fullName>
    </alternativeName>
    <alternativeName>
        <fullName evidence="7">U2 small nuclear ribonucleoprotein auxiliary factor large subunit B</fullName>
        <shortName evidence="7">U2 snRNP auxiliary factor large subunit B</shortName>
    </alternativeName>
</protein>
<comment type="function">
    <text evidence="1">Necessary for the splicing of pre-mRNA.</text>
</comment>
<comment type="subunit">
    <text evidence="4 8">Component of the spliceosome (Probable). Interacts with SF1 in the nucleus (PubMed:24580679).</text>
</comment>
<comment type="subcellular location">
    <subcellularLocation>
        <location evidence="4">Nucleus</location>
    </subcellularLocation>
    <subcellularLocation>
        <location evidence="5 6">Nucleus speckle</location>
    </subcellularLocation>
    <text evidence="5 6">Colocalizes in nuclear speckles with DRT111/RSN2/SFPS.</text>
</comment>
<comment type="domain">
    <text>N-terminal RS domain has a very strong bias in favor of D over S.</text>
</comment>
<comment type="similarity">
    <text evidence="8">Belongs to the splicing factor SR family.</text>
</comment>
<comment type="sequence caution" evidence="8">
    <conflict type="erroneous gene model prediction">
        <sequence resource="EMBL-CDS" id="AAG51641"/>
    </conflict>
</comment>
<dbReference type="EMBL" id="AC018908">
    <property type="protein sequence ID" value="AAG51641.1"/>
    <property type="status" value="ALT_SEQ"/>
    <property type="molecule type" value="Genomic_DNA"/>
</dbReference>
<dbReference type="EMBL" id="CP002684">
    <property type="protein sequence ID" value="AEE33746.1"/>
    <property type="molecule type" value="Genomic_DNA"/>
</dbReference>
<dbReference type="EMBL" id="AY140014">
    <property type="protein sequence ID" value="AAM98156.1"/>
    <property type="molecule type" value="mRNA"/>
</dbReference>
<dbReference type="PIR" id="E96634">
    <property type="entry name" value="E96634"/>
</dbReference>
<dbReference type="RefSeq" id="NP_176287.3">
    <property type="nucleotide sequence ID" value="NM_104771.4"/>
</dbReference>
<dbReference type="SMR" id="Q8L716"/>
<dbReference type="FunCoup" id="Q8L716">
    <property type="interactions" value="4260"/>
</dbReference>
<dbReference type="STRING" id="3702.Q8L716"/>
<dbReference type="PaxDb" id="3702-AT1G60900.1"/>
<dbReference type="ProteomicsDB" id="243200"/>
<dbReference type="EnsemblPlants" id="AT1G60900.1">
    <property type="protein sequence ID" value="AT1G60900.1"/>
    <property type="gene ID" value="AT1G60900"/>
</dbReference>
<dbReference type="GeneID" id="842382"/>
<dbReference type="Gramene" id="AT1G60900.1">
    <property type="protein sequence ID" value="AT1G60900.1"/>
    <property type="gene ID" value="AT1G60900"/>
</dbReference>
<dbReference type="KEGG" id="ath:AT1G60900"/>
<dbReference type="Araport" id="AT1G60900"/>
<dbReference type="TAIR" id="AT1G60900">
    <property type="gene designation" value="U2AF65B"/>
</dbReference>
<dbReference type="eggNOG" id="KOG0120">
    <property type="taxonomic scope" value="Eukaryota"/>
</dbReference>
<dbReference type="HOGENOM" id="CLU_021795_4_1_1"/>
<dbReference type="InParanoid" id="Q8L716"/>
<dbReference type="OMA" id="DVRCECE"/>
<dbReference type="PhylomeDB" id="Q8L716"/>
<dbReference type="PRO" id="PR:Q8L716"/>
<dbReference type="Proteomes" id="UP000006548">
    <property type="component" value="Chromosome 1"/>
</dbReference>
<dbReference type="ExpressionAtlas" id="Q8L716">
    <property type="expression patterns" value="baseline and differential"/>
</dbReference>
<dbReference type="GO" id="GO:0016607">
    <property type="term" value="C:nuclear speck"/>
    <property type="evidence" value="ECO:0000314"/>
    <property type="project" value="UniProtKB"/>
</dbReference>
<dbReference type="GO" id="GO:0005634">
    <property type="term" value="C:nucleus"/>
    <property type="evidence" value="ECO:0000314"/>
    <property type="project" value="UniProtKB"/>
</dbReference>
<dbReference type="GO" id="GO:0005681">
    <property type="term" value="C:spliceosomal complex"/>
    <property type="evidence" value="ECO:0007669"/>
    <property type="project" value="UniProtKB-KW"/>
</dbReference>
<dbReference type="GO" id="GO:0003723">
    <property type="term" value="F:RNA binding"/>
    <property type="evidence" value="ECO:0007669"/>
    <property type="project" value="UniProtKB-KW"/>
</dbReference>
<dbReference type="GO" id="GO:0000398">
    <property type="term" value="P:mRNA splicing, via spliceosome"/>
    <property type="evidence" value="ECO:0000315"/>
    <property type="project" value="TAIR"/>
</dbReference>
<dbReference type="GO" id="GO:0009737">
    <property type="term" value="P:response to abscisic acid"/>
    <property type="evidence" value="ECO:0000314"/>
    <property type="project" value="TAIR"/>
</dbReference>
<dbReference type="CDD" id="cd12230">
    <property type="entry name" value="RRM1_U2AF65"/>
    <property type="match status" value="1"/>
</dbReference>
<dbReference type="CDD" id="cd12231">
    <property type="entry name" value="RRM2_U2AF65"/>
    <property type="match status" value="1"/>
</dbReference>
<dbReference type="CDD" id="cd12232">
    <property type="entry name" value="RRM3_U2AF65"/>
    <property type="match status" value="1"/>
</dbReference>
<dbReference type="FunFam" id="3.30.70.330:FF:000057">
    <property type="entry name" value="U2 snRNP auxiliary factor large subunit"/>
    <property type="match status" value="1"/>
</dbReference>
<dbReference type="FunFam" id="3.30.70.330:FF:000111">
    <property type="entry name" value="U2 snRNP auxiliary factor large subunit"/>
    <property type="match status" value="1"/>
</dbReference>
<dbReference type="FunFam" id="3.30.70.330:FF:000225">
    <property type="entry name" value="U2 snRNP auxiliary factor large subunit"/>
    <property type="match status" value="1"/>
</dbReference>
<dbReference type="Gene3D" id="3.30.70.330">
    <property type="match status" value="3"/>
</dbReference>
<dbReference type="InterPro" id="IPR012677">
    <property type="entry name" value="Nucleotide-bd_a/b_plait_sf"/>
</dbReference>
<dbReference type="InterPro" id="IPR035979">
    <property type="entry name" value="RBD_domain_sf"/>
</dbReference>
<dbReference type="InterPro" id="IPR000504">
    <property type="entry name" value="RRM_dom"/>
</dbReference>
<dbReference type="InterPro" id="IPR006529">
    <property type="entry name" value="U2AF_lg"/>
</dbReference>
<dbReference type="NCBIfam" id="TIGR01642">
    <property type="entry name" value="U2AF_lg"/>
    <property type="match status" value="1"/>
</dbReference>
<dbReference type="PANTHER" id="PTHR23139">
    <property type="entry name" value="RNA-BINDING PROTEIN"/>
    <property type="match status" value="1"/>
</dbReference>
<dbReference type="Pfam" id="PF00076">
    <property type="entry name" value="RRM_1"/>
    <property type="match status" value="1"/>
</dbReference>
<dbReference type="SMART" id="SM00360">
    <property type="entry name" value="RRM"/>
    <property type="match status" value="3"/>
</dbReference>
<dbReference type="SUPFAM" id="SSF54928">
    <property type="entry name" value="RNA-binding domain, RBD"/>
    <property type="match status" value="2"/>
</dbReference>
<dbReference type="PROSITE" id="PS50102">
    <property type="entry name" value="RRM"/>
    <property type="match status" value="2"/>
</dbReference>
<accession>Q8L716</accession>
<accession>Q9C961</accession>
<gene>
    <name evidence="7" type="primary">U2AF65B</name>
    <name evidence="9" type="ordered locus">At1g60900</name>
    <name evidence="10" type="ORF">T7P1.5</name>
</gene>
<name>U2A2B_ARATH</name>
<organism>
    <name type="scientific">Arabidopsis thaliana</name>
    <name type="common">Mouse-ear cress</name>
    <dbReference type="NCBI Taxonomy" id="3702"/>
    <lineage>
        <taxon>Eukaryota</taxon>
        <taxon>Viridiplantae</taxon>
        <taxon>Streptophyta</taxon>
        <taxon>Embryophyta</taxon>
        <taxon>Tracheophyta</taxon>
        <taxon>Spermatophyta</taxon>
        <taxon>Magnoliopsida</taxon>
        <taxon>eudicotyledons</taxon>
        <taxon>Gunneridae</taxon>
        <taxon>Pentapetalae</taxon>
        <taxon>rosids</taxon>
        <taxon>malvids</taxon>
        <taxon>Brassicales</taxon>
        <taxon>Brassicaceae</taxon>
        <taxon>Camelineae</taxon>
        <taxon>Arabidopsis</taxon>
    </lineage>
</organism>
<keyword id="KW-0507">mRNA processing</keyword>
<keyword id="KW-0508">mRNA splicing</keyword>
<keyword id="KW-0539">Nucleus</keyword>
<keyword id="KW-1185">Reference proteome</keyword>
<keyword id="KW-0677">Repeat</keyword>
<keyword id="KW-0694">RNA-binding</keyword>
<keyword id="KW-0747">Spliceosome</keyword>
<sequence>MMSYEGNGDGVAISTENHNENYISLESSPFHEDSKSRESHDLKKDSSKISEKDNENGRDKDGNKDRDREKDRDREKSRDRDREKSRDRDRDRERSKDRQRDRHHRDRHRDRSRERSEKRDDLDDDHHRRSRDRDRRRSRDRDREVRHRRRSRSRSRSRSERRSRSEHRHKSEHRSRSRSRSRSKSKRRSGFDMAPPDMLAATAVAAAGQVPSVPTTATIPGMFSNMFPMVPGQQLGALPVLPVQAMTQQATRHARRVYVGGLPPTANEQSVSTFFSQVMSAIGGNTAGPGDAVVNVYINHEKKFAFVEMRSVEEASNAMALDGIILEGVPVKVRRPTDYNPSLAATLGPSQPNPNLNLGAVGLSSGSTGGLEGPDRIFVGGLPYYFTEVQIRELLESFGPLRGFNLVKDRETGNSKGYAFCVYQDPSVTDIACAALNGIKMGDKTLTVRRAIQGAIQPKPEQEEVLLYAQQQIALQRLMFQPGGTPTKIVCLTQVVTADDLRDDEEYAEIMEDMRQEGGKFGNLVNVVIPRPNPDHDPTPGVGKVFLEYADVDGSSKARSGMNGRKFGGNQVVAVYYPEDKYAQGDYED</sequence>
<evidence type="ECO:0000250" key="1"/>
<evidence type="ECO:0000255" key="2">
    <source>
        <dbReference type="PROSITE-ProRule" id="PRU00176"/>
    </source>
</evidence>
<evidence type="ECO:0000256" key="3">
    <source>
        <dbReference type="SAM" id="MobiDB-lite"/>
    </source>
</evidence>
<evidence type="ECO:0000269" key="4">
    <source>
    </source>
</evidence>
<evidence type="ECO:0000269" key="5">
    <source>
    </source>
</evidence>
<evidence type="ECO:0000269" key="6">
    <source>
    </source>
</evidence>
<evidence type="ECO:0000303" key="7">
    <source>
    </source>
</evidence>
<evidence type="ECO:0000305" key="8"/>
<evidence type="ECO:0000312" key="9">
    <source>
        <dbReference type="Araport" id="AT1G60900"/>
    </source>
</evidence>
<evidence type="ECO:0000312" key="10">
    <source>
        <dbReference type="EMBL" id="AAG51641.1"/>
    </source>
</evidence>
<proteinExistence type="evidence at protein level"/>
<reference key="1">
    <citation type="journal article" date="2000" name="Nature">
        <title>Sequence and analysis of chromosome 1 of the plant Arabidopsis thaliana.</title>
        <authorList>
            <person name="Theologis A."/>
            <person name="Ecker J.R."/>
            <person name="Palm C.J."/>
            <person name="Federspiel N.A."/>
            <person name="Kaul S."/>
            <person name="White O."/>
            <person name="Alonso J."/>
            <person name="Altafi H."/>
            <person name="Araujo R."/>
            <person name="Bowman C.L."/>
            <person name="Brooks S.Y."/>
            <person name="Buehler E."/>
            <person name="Chan A."/>
            <person name="Chao Q."/>
            <person name="Chen H."/>
            <person name="Cheuk R.F."/>
            <person name="Chin C.W."/>
            <person name="Chung M.K."/>
            <person name="Conn L."/>
            <person name="Conway A.B."/>
            <person name="Conway A.R."/>
            <person name="Creasy T.H."/>
            <person name="Dewar K."/>
            <person name="Dunn P."/>
            <person name="Etgu P."/>
            <person name="Feldblyum T.V."/>
            <person name="Feng J.-D."/>
            <person name="Fong B."/>
            <person name="Fujii C.Y."/>
            <person name="Gill J.E."/>
            <person name="Goldsmith A.D."/>
            <person name="Haas B."/>
            <person name="Hansen N.F."/>
            <person name="Hughes B."/>
            <person name="Huizar L."/>
            <person name="Hunter J.L."/>
            <person name="Jenkins J."/>
            <person name="Johnson-Hopson C."/>
            <person name="Khan S."/>
            <person name="Khaykin E."/>
            <person name="Kim C.J."/>
            <person name="Koo H.L."/>
            <person name="Kremenetskaia I."/>
            <person name="Kurtz D.B."/>
            <person name="Kwan A."/>
            <person name="Lam B."/>
            <person name="Langin-Hooper S."/>
            <person name="Lee A."/>
            <person name="Lee J.M."/>
            <person name="Lenz C.A."/>
            <person name="Li J.H."/>
            <person name="Li Y.-P."/>
            <person name="Lin X."/>
            <person name="Liu S.X."/>
            <person name="Liu Z.A."/>
            <person name="Luros J.S."/>
            <person name="Maiti R."/>
            <person name="Marziali A."/>
            <person name="Militscher J."/>
            <person name="Miranda M."/>
            <person name="Nguyen M."/>
            <person name="Nierman W.C."/>
            <person name="Osborne B.I."/>
            <person name="Pai G."/>
            <person name="Peterson J."/>
            <person name="Pham P.K."/>
            <person name="Rizzo M."/>
            <person name="Rooney T."/>
            <person name="Rowley D."/>
            <person name="Sakano H."/>
            <person name="Salzberg S.L."/>
            <person name="Schwartz J.R."/>
            <person name="Shinn P."/>
            <person name="Southwick A.M."/>
            <person name="Sun H."/>
            <person name="Tallon L.J."/>
            <person name="Tambunga G."/>
            <person name="Toriumi M.J."/>
            <person name="Town C.D."/>
            <person name="Utterback T."/>
            <person name="Van Aken S."/>
            <person name="Vaysberg M."/>
            <person name="Vysotskaia V.S."/>
            <person name="Walker M."/>
            <person name="Wu D."/>
            <person name="Yu G."/>
            <person name="Fraser C.M."/>
            <person name="Venter J.C."/>
            <person name="Davis R.W."/>
        </authorList>
    </citation>
    <scope>NUCLEOTIDE SEQUENCE [LARGE SCALE GENOMIC DNA]</scope>
    <source>
        <strain>cv. Columbia</strain>
    </source>
</reference>
<reference key="2">
    <citation type="journal article" date="2017" name="Plant J.">
        <title>Araport11: a complete reannotation of the Arabidopsis thaliana reference genome.</title>
        <authorList>
            <person name="Cheng C.Y."/>
            <person name="Krishnakumar V."/>
            <person name="Chan A.P."/>
            <person name="Thibaud-Nissen F."/>
            <person name="Schobel S."/>
            <person name="Town C.D."/>
        </authorList>
    </citation>
    <scope>GENOME REANNOTATION</scope>
    <source>
        <strain>cv. Columbia</strain>
    </source>
</reference>
<reference key="3">
    <citation type="journal article" date="2003" name="Science">
        <title>Empirical analysis of transcriptional activity in the Arabidopsis genome.</title>
        <authorList>
            <person name="Yamada K."/>
            <person name="Lim J."/>
            <person name="Dale J.M."/>
            <person name="Chen H."/>
            <person name="Shinn P."/>
            <person name="Palm C.J."/>
            <person name="Southwick A.M."/>
            <person name="Wu H.C."/>
            <person name="Kim C.J."/>
            <person name="Nguyen M."/>
            <person name="Pham P.K."/>
            <person name="Cheuk R.F."/>
            <person name="Karlin-Newmann G."/>
            <person name="Liu S.X."/>
            <person name="Lam B."/>
            <person name="Sakano H."/>
            <person name="Wu T."/>
            <person name="Yu G."/>
            <person name="Miranda M."/>
            <person name="Quach H.L."/>
            <person name="Tripp M."/>
            <person name="Chang C.H."/>
            <person name="Lee J.M."/>
            <person name="Toriumi M.J."/>
            <person name="Chan M.M."/>
            <person name="Tang C.C."/>
            <person name="Onodera C.S."/>
            <person name="Deng J.M."/>
            <person name="Akiyama K."/>
            <person name="Ansari Y."/>
            <person name="Arakawa T."/>
            <person name="Banh J."/>
            <person name="Banno F."/>
            <person name="Bowser L."/>
            <person name="Brooks S.Y."/>
            <person name="Carninci P."/>
            <person name="Chao Q."/>
            <person name="Choy N."/>
            <person name="Enju A."/>
            <person name="Goldsmith A.D."/>
            <person name="Gurjal M."/>
            <person name="Hansen N.F."/>
            <person name="Hayashizaki Y."/>
            <person name="Johnson-Hopson C."/>
            <person name="Hsuan V.W."/>
            <person name="Iida K."/>
            <person name="Karnes M."/>
            <person name="Khan S."/>
            <person name="Koesema E."/>
            <person name="Ishida J."/>
            <person name="Jiang P.X."/>
            <person name="Jones T."/>
            <person name="Kawai J."/>
            <person name="Kamiya A."/>
            <person name="Meyers C."/>
            <person name="Nakajima M."/>
            <person name="Narusaka M."/>
            <person name="Seki M."/>
            <person name="Sakurai T."/>
            <person name="Satou M."/>
            <person name="Tamse R."/>
            <person name="Vaysberg M."/>
            <person name="Wallender E.K."/>
            <person name="Wong C."/>
            <person name="Yamamura Y."/>
            <person name="Yuan S."/>
            <person name="Shinozaki K."/>
            <person name="Davis R.W."/>
            <person name="Theologis A."/>
            <person name="Ecker J.R."/>
        </authorList>
    </citation>
    <scope>NUCLEOTIDE SEQUENCE [LARGE SCALE MRNA]</scope>
    <source>
        <strain>cv. Columbia</strain>
    </source>
</reference>
<reference key="4">
    <citation type="journal article" date="2014" name="Plant J.">
        <title>A homolog of splicing factor SF1 is essential for development and is involved in the alternative splicing of pre-mRNA in Arabidopsis thaliana.</title>
        <authorList>
            <person name="Jang Y.H."/>
            <person name="Park H.-Y."/>
            <person name="Lee K.C."/>
            <person name="Thu M.P."/>
            <person name="Kim S.-K."/>
            <person name="Suh M.C."/>
            <person name="Kang H."/>
            <person name="Kim J.-K."/>
        </authorList>
    </citation>
    <scope>INTERACTION WITH SF1</scope>
    <scope>SUBCELLULAR LOCATION</scope>
    <source>
        <strain>cv. Columbia</strain>
    </source>
</reference>
<reference key="5">
    <citation type="journal article" date="2017" name="Proc. Natl. Acad. Sci. U.S.A.">
        <title>SPF45-related splicing factor for phytochrome signaling promotes photomorphogenesis by regulating pre-mRNA splicing in Arabidopsis.</title>
        <authorList>
            <person name="Xin R."/>
            <person name="Zhu L."/>
            <person name="Salome P.A."/>
            <person name="Mancini E."/>
            <person name="Marshall C.M."/>
            <person name="Harmon F.G."/>
            <person name="Yanovsky M.J."/>
            <person name="Weigel D."/>
            <person name="Huq E."/>
        </authorList>
    </citation>
    <scope>SUBCELLULAR LOCATION</scope>
    <source>
        <strain>cv. Columbia</strain>
    </source>
</reference>
<reference key="6">
    <citation type="journal article" date="2022" name="Proc. Natl. Acad. Sci. U.S.A.">
        <title>SWAP1-SFPS-RRC1 splicing factor complex modulates pre-mRNA splicing to promote photomorphogenesis in Arabidopsis.</title>
        <authorList>
            <person name="Kathare P.K."/>
            <person name="Xin R."/>
            <person name="Ganesan A.S."/>
            <person name="June V.M."/>
            <person name="Reddy A.S.N."/>
            <person name="Huq E."/>
        </authorList>
    </citation>
    <scope>SUBCELLULAR LOCATION</scope>
    <source>
        <strain>cv. Columbia</strain>
    </source>
</reference>
<feature type="chain" id="PRO_0000352268" description="Splicing factor U2af large subunit B">
    <location>
        <begin position="1"/>
        <end position="589"/>
    </location>
</feature>
<feature type="domain" description="RRM 1" evidence="2">
    <location>
        <begin position="255"/>
        <end position="338"/>
    </location>
</feature>
<feature type="domain" description="RRM 2" evidence="2">
    <location>
        <begin position="375"/>
        <end position="453"/>
    </location>
</feature>
<feature type="domain" description="RRM 3" evidence="2">
    <location>
        <begin position="494"/>
        <end position="580"/>
    </location>
</feature>
<feature type="region of interest" description="Disordered" evidence="3">
    <location>
        <begin position="1"/>
        <end position="195"/>
    </location>
</feature>
<feature type="compositionally biased region" description="Polar residues" evidence="3">
    <location>
        <begin position="14"/>
        <end position="27"/>
    </location>
</feature>
<feature type="compositionally biased region" description="Basic and acidic residues" evidence="3">
    <location>
        <begin position="29"/>
        <end position="100"/>
    </location>
</feature>
<feature type="compositionally biased region" description="Basic and acidic residues" evidence="3">
    <location>
        <begin position="109"/>
        <end position="145"/>
    </location>
</feature>
<feature type="compositionally biased region" description="Basic residues" evidence="3">
    <location>
        <begin position="146"/>
        <end position="156"/>
    </location>
</feature>
<feature type="compositionally biased region" description="Basic residues" evidence="3">
    <location>
        <begin position="164"/>
        <end position="188"/>
    </location>
</feature>
<feature type="sequence conflict" description="In Ref. 3; AAM98156." evidence="8" ref="3">
    <original>R</original>
    <variation>P</variation>
    <location>
        <position position="255"/>
    </location>
</feature>